<proteinExistence type="inferred from homology"/>
<keyword id="KW-0963">Cytoplasm</keyword>
<keyword id="KW-0312">Gluconeogenesis</keyword>
<keyword id="KW-0324">Glycolysis</keyword>
<keyword id="KW-0413">Isomerase</keyword>
<comment type="function">
    <text evidence="1">Involved in the gluconeogenesis. Catalyzes stereospecifically the conversion of dihydroxyacetone phosphate (DHAP) to D-glyceraldehyde-3-phosphate (G3P).</text>
</comment>
<comment type="catalytic activity">
    <reaction evidence="1">
        <text>D-glyceraldehyde 3-phosphate = dihydroxyacetone phosphate</text>
        <dbReference type="Rhea" id="RHEA:18585"/>
        <dbReference type="ChEBI" id="CHEBI:57642"/>
        <dbReference type="ChEBI" id="CHEBI:59776"/>
        <dbReference type="EC" id="5.3.1.1"/>
    </reaction>
</comment>
<comment type="pathway">
    <text evidence="1">Carbohydrate biosynthesis; gluconeogenesis.</text>
</comment>
<comment type="pathway">
    <text evidence="1">Carbohydrate degradation; glycolysis; D-glyceraldehyde 3-phosphate from glycerone phosphate: step 1/1.</text>
</comment>
<comment type="subunit">
    <text evidence="1">Homodimer.</text>
</comment>
<comment type="subcellular location">
    <subcellularLocation>
        <location evidence="1">Cytoplasm</location>
    </subcellularLocation>
</comment>
<comment type="similarity">
    <text evidence="1">Belongs to the triosephosphate isomerase family.</text>
</comment>
<protein>
    <recommendedName>
        <fullName evidence="1">Triosephosphate isomerase</fullName>
        <shortName evidence="1">TIM</shortName>
        <shortName evidence="1">TPI</shortName>
        <ecNumber evidence="1">5.3.1.1</ecNumber>
    </recommendedName>
    <alternativeName>
        <fullName evidence="1">Triose-phosphate isomerase</fullName>
    </alternativeName>
</protein>
<gene>
    <name evidence="1" type="primary">tpiA</name>
    <name type="ordered locus">CPR_1299</name>
</gene>
<feature type="chain" id="PRO_0000307451" description="Triosephosphate isomerase">
    <location>
        <begin position="1"/>
        <end position="248"/>
    </location>
</feature>
<feature type="active site" description="Electrophile" evidence="1">
    <location>
        <position position="94"/>
    </location>
</feature>
<feature type="active site" description="Proton acceptor" evidence="1">
    <location>
        <position position="166"/>
    </location>
</feature>
<feature type="binding site" evidence="1">
    <location>
        <begin position="9"/>
        <end position="11"/>
    </location>
    <ligand>
        <name>substrate</name>
    </ligand>
</feature>
<feature type="binding site" evidence="1">
    <location>
        <position position="172"/>
    </location>
    <ligand>
        <name>substrate</name>
    </ligand>
</feature>
<feature type="binding site" evidence="1">
    <location>
        <position position="212"/>
    </location>
    <ligand>
        <name>substrate</name>
    </ligand>
</feature>
<feature type="binding site" evidence="1">
    <location>
        <begin position="233"/>
        <end position="234"/>
    </location>
    <ligand>
        <name>substrate</name>
    </ligand>
</feature>
<reference key="1">
    <citation type="journal article" date="2006" name="Genome Res.">
        <title>Skewed genomic variability in strains of the toxigenic bacterial pathogen, Clostridium perfringens.</title>
        <authorList>
            <person name="Myers G.S.A."/>
            <person name="Rasko D.A."/>
            <person name="Cheung J.K."/>
            <person name="Ravel J."/>
            <person name="Seshadri R."/>
            <person name="DeBoy R.T."/>
            <person name="Ren Q."/>
            <person name="Varga J."/>
            <person name="Awad M.M."/>
            <person name="Brinkac L.M."/>
            <person name="Daugherty S.C."/>
            <person name="Haft D.H."/>
            <person name="Dodson R.J."/>
            <person name="Madupu R."/>
            <person name="Nelson W.C."/>
            <person name="Rosovitz M.J."/>
            <person name="Sullivan S.A."/>
            <person name="Khouri H."/>
            <person name="Dimitrov G.I."/>
            <person name="Watkins K.L."/>
            <person name="Mulligan S."/>
            <person name="Benton J."/>
            <person name="Radune D."/>
            <person name="Fisher D.J."/>
            <person name="Atkins H.S."/>
            <person name="Hiscox T."/>
            <person name="Jost B.H."/>
            <person name="Billington S.J."/>
            <person name="Songer J.G."/>
            <person name="McClane B.A."/>
            <person name="Titball R.W."/>
            <person name="Rood J.I."/>
            <person name="Melville S.B."/>
            <person name="Paulsen I.T."/>
        </authorList>
    </citation>
    <scope>NUCLEOTIDE SEQUENCE [LARGE SCALE GENOMIC DNA]</scope>
    <source>
        <strain>SM101 / Type A</strain>
    </source>
</reference>
<name>TPIS_CLOPS</name>
<evidence type="ECO:0000255" key="1">
    <source>
        <dbReference type="HAMAP-Rule" id="MF_00147"/>
    </source>
</evidence>
<dbReference type="EC" id="5.3.1.1" evidence="1"/>
<dbReference type="EMBL" id="CP000312">
    <property type="protein sequence ID" value="ABG86772.1"/>
    <property type="molecule type" value="Genomic_DNA"/>
</dbReference>
<dbReference type="RefSeq" id="WP_003450470.1">
    <property type="nucleotide sequence ID" value="NZ_CAXVJE010000001.1"/>
</dbReference>
<dbReference type="SMR" id="Q0STD6"/>
<dbReference type="GeneID" id="93002163"/>
<dbReference type="KEGG" id="cpr:CPR_1299"/>
<dbReference type="UniPathway" id="UPA00109">
    <property type="reaction ID" value="UER00189"/>
</dbReference>
<dbReference type="UniPathway" id="UPA00138"/>
<dbReference type="Proteomes" id="UP000001824">
    <property type="component" value="Chromosome"/>
</dbReference>
<dbReference type="GO" id="GO:0005829">
    <property type="term" value="C:cytosol"/>
    <property type="evidence" value="ECO:0007669"/>
    <property type="project" value="TreeGrafter"/>
</dbReference>
<dbReference type="GO" id="GO:0004807">
    <property type="term" value="F:triose-phosphate isomerase activity"/>
    <property type="evidence" value="ECO:0007669"/>
    <property type="project" value="UniProtKB-UniRule"/>
</dbReference>
<dbReference type="GO" id="GO:0006094">
    <property type="term" value="P:gluconeogenesis"/>
    <property type="evidence" value="ECO:0007669"/>
    <property type="project" value="UniProtKB-UniRule"/>
</dbReference>
<dbReference type="GO" id="GO:0046166">
    <property type="term" value="P:glyceraldehyde-3-phosphate biosynthetic process"/>
    <property type="evidence" value="ECO:0007669"/>
    <property type="project" value="TreeGrafter"/>
</dbReference>
<dbReference type="GO" id="GO:0019563">
    <property type="term" value="P:glycerol catabolic process"/>
    <property type="evidence" value="ECO:0007669"/>
    <property type="project" value="TreeGrafter"/>
</dbReference>
<dbReference type="GO" id="GO:0006096">
    <property type="term" value="P:glycolytic process"/>
    <property type="evidence" value="ECO:0007669"/>
    <property type="project" value="UniProtKB-UniRule"/>
</dbReference>
<dbReference type="CDD" id="cd00311">
    <property type="entry name" value="TIM"/>
    <property type="match status" value="1"/>
</dbReference>
<dbReference type="FunFam" id="3.20.20.70:FF:000016">
    <property type="entry name" value="Triosephosphate isomerase"/>
    <property type="match status" value="1"/>
</dbReference>
<dbReference type="Gene3D" id="3.20.20.70">
    <property type="entry name" value="Aldolase class I"/>
    <property type="match status" value="1"/>
</dbReference>
<dbReference type="HAMAP" id="MF_00147_B">
    <property type="entry name" value="TIM_B"/>
    <property type="match status" value="1"/>
</dbReference>
<dbReference type="InterPro" id="IPR013785">
    <property type="entry name" value="Aldolase_TIM"/>
</dbReference>
<dbReference type="InterPro" id="IPR035990">
    <property type="entry name" value="TIM_sf"/>
</dbReference>
<dbReference type="InterPro" id="IPR022896">
    <property type="entry name" value="TrioseP_Isoase_bac/euk"/>
</dbReference>
<dbReference type="InterPro" id="IPR000652">
    <property type="entry name" value="Triosephosphate_isomerase"/>
</dbReference>
<dbReference type="InterPro" id="IPR020861">
    <property type="entry name" value="Triosephosphate_isomerase_AS"/>
</dbReference>
<dbReference type="NCBIfam" id="TIGR00419">
    <property type="entry name" value="tim"/>
    <property type="match status" value="1"/>
</dbReference>
<dbReference type="PANTHER" id="PTHR21139">
    <property type="entry name" value="TRIOSEPHOSPHATE ISOMERASE"/>
    <property type="match status" value="1"/>
</dbReference>
<dbReference type="PANTHER" id="PTHR21139:SF42">
    <property type="entry name" value="TRIOSEPHOSPHATE ISOMERASE"/>
    <property type="match status" value="1"/>
</dbReference>
<dbReference type="Pfam" id="PF00121">
    <property type="entry name" value="TIM"/>
    <property type="match status" value="1"/>
</dbReference>
<dbReference type="SUPFAM" id="SSF51351">
    <property type="entry name" value="Triosephosphate isomerase (TIM)"/>
    <property type="match status" value="1"/>
</dbReference>
<dbReference type="PROSITE" id="PS00171">
    <property type="entry name" value="TIM_1"/>
    <property type="match status" value="1"/>
</dbReference>
<dbReference type="PROSITE" id="PS51440">
    <property type="entry name" value="TIM_2"/>
    <property type="match status" value="1"/>
</dbReference>
<organism>
    <name type="scientific">Clostridium perfringens (strain SM101 / Type A)</name>
    <dbReference type="NCBI Taxonomy" id="289380"/>
    <lineage>
        <taxon>Bacteria</taxon>
        <taxon>Bacillati</taxon>
        <taxon>Bacillota</taxon>
        <taxon>Clostridia</taxon>
        <taxon>Eubacteriales</taxon>
        <taxon>Clostridiaceae</taxon>
        <taxon>Clostridium</taxon>
    </lineage>
</organism>
<sequence>MRTPIIAGNWKMHYTIDEAVKLVEELKPLVKDAKCEVVVCPTFVCLDAVKKAVEGTNIKVGAQNMHFEEKGAFTGEIAPRMLEAMNIDYVIIGHSERREYFNETDETCNKKVKAAFAHNLTPILCCGETLEQRENGTTNDVIKAQITADLEGLTKEQAEKVVIAYEPIWAIGTGKTATSDQANETIAAIRAMVAEMFGQEVADKVRIQYGGSVKPNTIAEQMAKSDIDGALVGGASLVAADFAQIVNY</sequence>
<accession>Q0STD6</accession>